<protein>
    <recommendedName>
        <fullName evidence="1">Pantothenate synthetase</fullName>
        <shortName evidence="1">PS</shortName>
        <ecNumber evidence="1">6.3.2.1</ecNumber>
    </recommendedName>
    <alternativeName>
        <fullName evidence="1">Pantoate--beta-alanine ligase</fullName>
    </alternativeName>
    <alternativeName>
        <fullName evidence="1">Pantoate-activating enzyme</fullName>
    </alternativeName>
</protein>
<feature type="chain" id="PRO_1000097104" description="Pantothenate synthetase">
    <location>
        <begin position="1"/>
        <end position="284"/>
    </location>
</feature>
<feature type="active site" description="Proton donor" evidence="1">
    <location>
        <position position="37"/>
    </location>
</feature>
<feature type="binding site" evidence="1">
    <location>
        <begin position="30"/>
        <end position="37"/>
    </location>
    <ligand>
        <name>ATP</name>
        <dbReference type="ChEBI" id="CHEBI:30616"/>
    </ligand>
</feature>
<feature type="binding site" evidence="1">
    <location>
        <position position="61"/>
    </location>
    <ligand>
        <name>(R)-pantoate</name>
        <dbReference type="ChEBI" id="CHEBI:15980"/>
    </ligand>
</feature>
<feature type="binding site" evidence="1">
    <location>
        <position position="61"/>
    </location>
    <ligand>
        <name>beta-alanine</name>
        <dbReference type="ChEBI" id="CHEBI:57966"/>
    </ligand>
</feature>
<feature type="binding site" evidence="1">
    <location>
        <begin position="149"/>
        <end position="152"/>
    </location>
    <ligand>
        <name>ATP</name>
        <dbReference type="ChEBI" id="CHEBI:30616"/>
    </ligand>
</feature>
<feature type="binding site" evidence="1">
    <location>
        <position position="155"/>
    </location>
    <ligand>
        <name>(R)-pantoate</name>
        <dbReference type="ChEBI" id="CHEBI:15980"/>
    </ligand>
</feature>
<feature type="binding site" evidence="1">
    <location>
        <position position="178"/>
    </location>
    <ligand>
        <name>ATP</name>
        <dbReference type="ChEBI" id="CHEBI:30616"/>
    </ligand>
</feature>
<feature type="binding site" evidence="1">
    <location>
        <begin position="186"/>
        <end position="189"/>
    </location>
    <ligand>
        <name>ATP</name>
        <dbReference type="ChEBI" id="CHEBI:30616"/>
    </ligand>
</feature>
<evidence type="ECO:0000255" key="1">
    <source>
        <dbReference type="HAMAP-Rule" id="MF_00158"/>
    </source>
</evidence>
<keyword id="KW-0067">ATP-binding</keyword>
<keyword id="KW-0963">Cytoplasm</keyword>
<keyword id="KW-0436">Ligase</keyword>
<keyword id="KW-0547">Nucleotide-binding</keyword>
<keyword id="KW-0566">Pantothenate biosynthesis</keyword>
<comment type="function">
    <text evidence="1">Catalyzes the condensation of pantoate with beta-alanine in an ATP-dependent reaction via a pantoyl-adenylate intermediate.</text>
</comment>
<comment type="catalytic activity">
    <reaction evidence="1">
        <text>(R)-pantoate + beta-alanine + ATP = (R)-pantothenate + AMP + diphosphate + H(+)</text>
        <dbReference type="Rhea" id="RHEA:10912"/>
        <dbReference type="ChEBI" id="CHEBI:15378"/>
        <dbReference type="ChEBI" id="CHEBI:15980"/>
        <dbReference type="ChEBI" id="CHEBI:29032"/>
        <dbReference type="ChEBI" id="CHEBI:30616"/>
        <dbReference type="ChEBI" id="CHEBI:33019"/>
        <dbReference type="ChEBI" id="CHEBI:57966"/>
        <dbReference type="ChEBI" id="CHEBI:456215"/>
        <dbReference type="EC" id="6.3.2.1"/>
    </reaction>
</comment>
<comment type="pathway">
    <text evidence="1">Cofactor biosynthesis; (R)-pantothenate biosynthesis; (R)-pantothenate from (R)-pantoate and beta-alanine: step 1/1.</text>
</comment>
<comment type="subunit">
    <text evidence="1">Homodimer.</text>
</comment>
<comment type="subcellular location">
    <subcellularLocation>
        <location evidence="1">Cytoplasm</location>
    </subcellularLocation>
</comment>
<comment type="miscellaneous">
    <text evidence="1">The reaction proceeds by a bi uni uni bi ping pong mechanism.</text>
</comment>
<comment type="similarity">
    <text evidence="1">Belongs to the pantothenate synthetase family.</text>
</comment>
<organism>
    <name type="scientific">Salmonella paratyphi B (strain ATCC BAA-1250 / SPB7)</name>
    <dbReference type="NCBI Taxonomy" id="1016998"/>
    <lineage>
        <taxon>Bacteria</taxon>
        <taxon>Pseudomonadati</taxon>
        <taxon>Pseudomonadota</taxon>
        <taxon>Gammaproteobacteria</taxon>
        <taxon>Enterobacterales</taxon>
        <taxon>Enterobacteriaceae</taxon>
        <taxon>Salmonella</taxon>
    </lineage>
</organism>
<proteinExistence type="inferred from homology"/>
<name>PANC_SALPB</name>
<reference key="1">
    <citation type="submission" date="2007-11" db="EMBL/GenBank/DDBJ databases">
        <authorList>
            <consortium name="The Salmonella enterica serovar Paratyphi B Genome Sequencing Project"/>
            <person name="McClelland M."/>
            <person name="Sanderson E.K."/>
            <person name="Porwollik S."/>
            <person name="Spieth J."/>
            <person name="Clifton W.S."/>
            <person name="Fulton R."/>
            <person name="Cordes M."/>
            <person name="Wollam A."/>
            <person name="Shah N."/>
            <person name="Pepin K."/>
            <person name="Bhonagiri V."/>
            <person name="Nash W."/>
            <person name="Johnson M."/>
            <person name="Thiruvilangam P."/>
            <person name="Wilson R."/>
        </authorList>
    </citation>
    <scope>NUCLEOTIDE SEQUENCE [LARGE SCALE GENOMIC DNA]</scope>
    <source>
        <strain>ATCC BAA-1250 / SPB7</strain>
    </source>
</reference>
<gene>
    <name evidence="1" type="primary">panC</name>
    <name type="ordered locus">SPAB_00223</name>
</gene>
<sequence length="284" mass="31873">MLIIETLPLLRQHIRRLRQEGKRVALVPTMGNLHDGHMKLVDEAKARADVVFVSIFVNPMQFDRPDDLVRYPRTLQEDCEKLNKRKVDYVFAPAVEEIYPQGLEGQTYVDVPGLSTMLEGASRPGHFRGVSTIVSKLFNLIQPDIACFGEKDFQQLALIRKMVADMSYDIEIVGVPIIRAKDGLALSSRNSYLTAEQRKIAPGLHNVMNSIAEKLIAGNRELQEIIAIAEQELNEKGFRADDIQIRDADTLLELTETSKRAVILAAAWLGQARLIDNQSVTLAQ</sequence>
<accession>A9MZT0</accession>
<dbReference type="EC" id="6.3.2.1" evidence="1"/>
<dbReference type="EMBL" id="CP000886">
    <property type="protein sequence ID" value="ABX65665.1"/>
    <property type="molecule type" value="Genomic_DNA"/>
</dbReference>
<dbReference type="RefSeq" id="WP_000905340.1">
    <property type="nucleotide sequence ID" value="NC_010102.1"/>
</dbReference>
<dbReference type="SMR" id="A9MZT0"/>
<dbReference type="KEGG" id="spq:SPAB_00223"/>
<dbReference type="PATRIC" id="fig|1016998.12.peg.215"/>
<dbReference type="HOGENOM" id="CLU_047148_0_0_6"/>
<dbReference type="BioCyc" id="SENT1016998:SPAB_RS00910-MONOMER"/>
<dbReference type="UniPathway" id="UPA00028">
    <property type="reaction ID" value="UER00005"/>
</dbReference>
<dbReference type="Proteomes" id="UP000008556">
    <property type="component" value="Chromosome"/>
</dbReference>
<dbReference type="GO" id="GO:0005829">
    <property type="term" value="C:cytosol"/>
    <property type="evidence" value="ECO:0007669"/>
    <property type="project" value="TreeGrafter"/>
</dbReference>
<dbReference type="GO" id="GO:0005524">
    <property type="term" value="F:ATP binding"/>
    <property type="evidence" value="ECO:0007669"/>
    <property type="project" value="UniProtKB-KW"/>
</dbReference>
<dbReference type="GO" id="GO:0004592">
    <property type="term" value="F:pantoate-beta-alanine ligase activity"/>
    <property type="evidence" value="ECO:0007669"/>
    <property type="project" value="UniProtKB-UniRule"/>
</dbReference>
<dbReference type="GO" id="GO:0015940">
    <property type="term" value="P:pantothenate biosynthetic process"/>
    <property type="evidence" value="ECO:0007669"/>
    <property type="project" value="UniProtKB-UniRule"/>
</dbReference>
<dbReference type="CDD" id="cd00560">
    <property type="entry name" value="PanC"/>
    <property type="match status" value="1"/>
</dbReference>
<dbReference type="FunFam" id="3.30.1300.10:FF:000001">
    <property type="entry name" value="Pantothenate synthetase"/>
    <property type="match status" value="1"/>
</dbReference>
<dbReference type="FunFam" id="3.40.50.620:FF:000013">
    <property type="entry name" value="Pantothenate synthetase"/>
    <property type="match status" value="1"/>
</dbReference>
<dbReference type="Gene3D" id="3.40.50.620">
    <property type="entry name" value="HUPs"/>
    <property type="match status" value="1"/>
</dbReference>
<dbReference type="Gene3D" id="3.30.1300.10">
    <property type="entry name" value="Pantoate-beta-alanine ligase, C-terminal domain"/>
    <property type="match status" value="1"/>
</dbReference>
<dbReference type="HAMAP" id="MF_00158">
    <property type="entry name" value="PanC"/>
    <property type="match status" value="1"/>
</dbReference>
<dbReference type="InterPro" id="IPR003721">
    <property type="entry name" value="Pantoate_ligase"/>
</dbReference>
<dbReference type="InterPro" id="IPR042176">
    <property type="entry name" value="Pantoate_ligase_C"/>
</dbReference>
<dbReference type="InterPro" id="IPR014729">
    <property type="entry name" value="Rossmann-like_a/b/a_fold"/>
</dbReference>
<dbReference type="NCBIfam" id="TIGR00018">
    <property type="entry name" value="panC"/>
    <property type="match status" value="1"/>
</dbReference>
<dbReference type="PANTHER" id="PTHR21299">
    <property type="entry name" value="CYTIDYLATE KINASE/PANTOATE-BETA-ALANINE LIGASE"/>
    <property type="match status" value="1"/>
</dbReference>
<dbReference type="PANTHER" id="PTHR21299:SF1">
    <property type="entry name" value="PANTOATE--BETA-ALANINE LIGASE"/>
    <property type="match status" value="1"/>
</dbReference>
<dbReference type="Pfam" id="PF02569">
    <property type="entry name" value="Pantoate_ligase"/>
    <property type="match status" value="1"/>
</dbReference>
<dbReference type="SUPFAM" id="SSF52374">
    <property type="entry name" value="Nucleotidylyl transferase"/>
    <property type="match status" value="1"/>
</dbReference>